<protein>
    <recommendedName>
        <fullName evidence="1">Protein-glutamate methylesterase/protein-glutamine glutaminase 2</fullName>
        <ecNumber evidence="1">3.1.1.61</ecNumber>
        <ecNumber evidence="1">3.5.1.44</ecNumber>
    </recommendedName>
</protein>
<gene>
    <name evidence="1" type="primary">cheB2</name>
    <name type="ordered locus">XOO2714</name>
</gene>
<accession>Q2P1V8</accession>
<reference key="1">
    <citation type="journal article" date="2005" name="Jpn. Agric. Res. Q.">
        <title>Genome sequence of Xanthomonas oryzae pv. oryzae suggests contribution of large numbers of effector genes and insertion sequences to its race diversity.</title>
        <authorList>
            <person name="Ochiai H."/>
            <person name="Inoue Y."/>
            <person name="Takeya M."/>
            <person name="Sasaki A."/>
            <person name="Kaku H."/>
        </authorList>
    </citation>
    <scope>NUCLEOTIDE SEQUENCE [LARGE SCALE GENOMIC DNA]</scope>
    <source>
        <strain>MAFF 311018</strain>
    </source>
</reference>
<keyword id="KW-0145">Chemotaxis</keyword>
<keyword id="KW-0963">Cytoplasm</keyword>
<keyword id="KW-0378">Hydrolase</keyword>
<keyword id="KW-0597">Phosphoprotein</keyword>
<comment type="function">
    <text evidence="1">Involved in chemotaxis. Part of a chemotaxis signal transduction system that modulates chemotaxis in response to various stimuli. Catalyzes the demethylation of specific methylglutamate residues introduced into the chemoreceptors (methyl-accepting chemotaxis proteins or MCP) by CheR. Also mediates the irreversible deamidation of specific glutamine residues to glutamic acid.</text>
</comment>
<comment type="catalytic activity">
    <reaction evidence="1">
        <text>[protein]-L-glutamate 5-O-methyl ester + H2O = L-glutamyl-[protein] + methanol + H(+)</text>
        <dbReference type="Rhea" id="RHEA:23236"/>
        <dbReference type="Rhea" id="RHEA-COMP:10208"/>
        <dbReference type="Rhea" id="RHEA-COMP:10311"/>
        <dbReference type="ChEBI" id="CHEBI:15377"/>
        <dbReference type="ChEBI" id="CHEBI:15378"/>
        <dbReference type="ChEBI" id="CHEBI:17790"/>
        <dbReference type="ChEBI" id="CHEBI:29973"/>
        <dbReference type="ChEBI" id="CHEBI:82795"/>
        <dbReference type="EC" id="3.1.1.61"/>
    </reaction>
</comment>
<comment type="catalytic activity">
    <reaction evidence="1">
        <text>L-glutaminyl-[protein] + H2O = L-glutamyl-[protein] + NH4(+)</text>
        <dbReference type="Rhea" id="RHEA:16441"/>
        <dbReference type="Rhea" id="RHEA-COMP:10207"/>
        <dbReference type="Rhea" id="RHEA-COMP:10208"/>
        <dbReference type="ChEBI" id="CHEBI:15377"/>
        <dbReference type="ChEBI" id="CHEBI:28938"/>
        <dbReference type="ChEBI" id="CHEBI:29973"/>
        <dbReference type="ChEBI" id="CHEBI:30011"/>
        <dbReference type="EC" id="3.5.1.44"/>
    </reaction>
</comment>
<comment type="subcellular location">
    <subcellularLocation>
        <location evidence="1">Cytoplasm</location>
    </subcellularLocation>
</comment>
<comment type="domain">
    <text evidence="1">Contains a C-terminal catalytic domain, and an N-terminal region which modulates catalytic activity.</text>
</comment>
<comment type="PTM">
    <text evidence="1">Phosphorylated by CheA. Phosphorylation of the N-terminal regulatory domain activates the methylesterase activity.</text>
</comment>
<comment type="similarity">
    <text evidence="1">Belongs to the CheB family.</text>
</comment>
<sequence length="358" mass="38069">MTLETPVRVLIVDDSAVVRQMLTEILSRDAGIEVVGSAADPLLAREKIKRLNPDVITLDVEMPRMDGLVFLENLMRLRPTPVVMISSLTERGADTTLQALSLGAVDFVSKPKIDVARGLEGYAEEIVSKVKMAAKAKVSALHRPSAPKVTLDMQSAPMPGSALRFRTTDRLVAIGASAGGTEALRVVLEHMPADAPAVVMTQHLPASFSTAFAERLNRHSAMSVREATDGEAILPGHAYLPPGGQHLRIIRDGARWRCRIDDGPPVNRHKPAVDVLFRSVAANAGANAVGAILTGMGDDGARGLLEMLQAGAPTLVQDEASSVVWGMPGAAYKLGAAQEVVPLDRVAERLLALSAQAR</sequence>
<proteinExistence type="inferred from homology"/>
<evidence type="ECO:0000255" key="1">
    <source>
        <dbReference type="HAMAP-Rule" id="MF_00099"/>
    </source>
</evidence>
<dbReference type="EC" id="3.1.1.61" evidence="1"/>
<dbReference type="EC" id="3.5.1.44" evidence="1"/>
<dbReference type="EMBL" id="AP008229">
    <property type="protein sequence ID" value="BAE69469.1"/>
    <property type="molecule type" value="Genomic_DNA"/>
</dbReference>
<dbReference type="RefSeq" id="WP_011259440.1">
    <property type="nucleotide sequence ID" value="NC_007705.1"/>
</dbReference>
<dbReference type="SMR" id="Q2P1V8"/>
<dbReference type="KEGG" id="xom:XOO2714"/>
<dbReference type="HOGENOM" id="CLU_000445_51_0_6"/>
<dbReference type="GO" id="GO:0005737">
    <property type="term" value="C:cytoplasm"/>
    <property type="evidence" value="ECO:0007669"/>
    <property type="project" value="UniProtKB-SubCell"/>
</dbReference>
<dbReference type="GO" id="GO:0000156">
    <property type="term" value="F:phosphorelay response regulator activity"/>
    <property type="evidence" value="ECO:0007669"/>
    <property type="project" value="InterPro"/>
</dbReference>
<dbReference type="GO" id="GO:0008984">
    <property type="term" value="F:protein-glutamate methylesterase activity"/>
    <property type="evidence" value="ECO:0007669"/>
    <property type="project" value="UniProtKB-UniRule"/>
</dbReference>
<dbReference type="GO" id="GO:0050568">
    <property type="term" value="F:protein-glutamine glutaminase activity"/>
    <property type="evidence" value="ECO:0007669"/>
    <property type="project" value="UniProtKB-UniRule"/>
</dbReference>
<dbReference type="GO" id="GO:0006935">
    <property type="term" value="P:chemotaxis"/>
    <property type="evidence" value="ECO:0007669"/>
    <property type="project" value="UniProtKB-UniRule"/>
</dbReference>
<dbReference type="CDD" id="cd16432">
    <property type="entry name" value="CheB_Rec"/>
    <property type="match status" value="1"/>
</dbReference>
<dbReference type="CDD" id="cd17541">
    <property type="entry name" value="REC_CheB-like"/>
    <property type="match status" value="1"/>
</dbReference>
<dbReference type="FunFam" id="3.40.50.2300:FF:000060">
    <property type="entry name" value="Protein-glutamate methylesterase/protein-glutamine glutaminase"/>
    <property type="match status" value="1"/>
</dbReference>
<dbReference type="Gene3D" id="3.40.50.2300">
    <property type="match status" value="1"/>
</dbReference>
<dbReference type="Gene3D" id="3.40.50.180">
    <property type="entry name" value="Methylesterase CheB, C-terminal domain"/>
    <property type="match status" value="1"/>
</dbReference>
<dbReference type="HAMAP" id="MF_00099">
    <property type="entry name" value="CheB_chemtxs"/>
    <property type="match status" value="1"/>
</dbReference>
<dbReference type="InterPro" id="IPR008248">
    <property type="entry name" value="CheB-like"/>
</dbReference>
<dbReference type="InterPro" id="IPR035909">
    <property type="entry name" value="CheB_C"/>
</dbReference>
<dbReference type="InterPro" id="IPR011006">
    <property type="entry name" value="CheY-like_superfamily"/>
</dbReference>
<dbReference type="InterPro" id="IPR000673">
    <property type="entry name" value="Sig_transdc_resp-reg_Me-estase"/>
</dbReference>
<dbReference type="InterPro" id="IPR001789">
    <property type="entry name" value="Sig_transdc_resp-reg_receiver"/>
</dbReference>
<dbReference type="NCBIfam" id="NF001965">
    <property type="entry name" value="PRK00742.1"/>
    <property type="match status" value="1"/>
</dbReference>
<dbReference type="NCBIfam" id="NF009206">
    <property type="entry name" value="PRK12555.1"/>
    <property type="match status" value="1"/>
</dbReference>
<dbReference type="PANTHER" id="PTHR42872">
    <property type="entry name" value="PROTEIN-GLUTAMATE METHYLESTERASE/PROTEIN-GLUTAMINE GLUTAMINASE"/>
    <property type="match status" value="1"/>
</dbReference>
<dbReference type="PANTHER" id="PTHR42872:SF6">
    <property type="entry name" value="PROTEIN-GLUTAMATE METHYLESTERASE_PROTEIN-GLUTAMINE GLUTAMINASE"/>
    <property type="match status" value="1"/>
</dbReference>
<dbReference type="Pfam" id="PF01339">
    <property type="entry name" value="CheB_methylest"/>
    <property type="match status" value="1"/>
</dbReference>
<dbReference type="Pfam" id="PF00072">
    <property type="entry name" value="Response_reg"/>
    <property type="match status" value="1"/>
</dbReference>
<dbReference type="PIRSF" id="PIRSF000876">
    <property type="entry name" value="RR_chemtxs_CheB"/>
    <property type="match status" value="1"/>
</dbReference>
<dbReference type="SMART" id="SM00448">
    <property type="entry name" value="REC"/>
    <property type="match status" value="1"/>
</dbReference>
<dbReference type="SUPFAM" id="SSF52172">
    <property type="entry name" value="CheY-like"/>
    <property type="match status" value="1"/>
</dbReference>
<dbReference type="SUPFAM" id="SSF52738">
    <property type="entry name" value="Methylesterase CheB, C-terminal domain"/>
    <property type="match status" value="1"/>
</dbReference>
<dbReference type="PROSITE" id="PS50122">
    <property type="entry name" value="CHEB"/>
    <property type="match status" value="1"/>
</dbReference>
<dbReference type="PROSITE" id="PS50110">
    <property type="entry name" value="RESPONSE_REGULATORY"/>
    <property type="match status" value="1"/>
</dbReference>
<organism>
    <name type="scientific">Xanthomonas oryzae pv. oryzae (strain MAFF 311018)</name>
    <dbReference type="NCBI Taxonomy" id="342109"/>
    <lineage>
        <taxon>Bacteria</taxon>
        <taxon>Pseudomonadati</taxon>
        <taxon>Pseudomonadota</taxon>
        <taxon>Gammaproteobacteria</taxon>
        <taxon>Lysobacterales</taxon>
        <taxon>Lysobacteraceae</taxon>
        <taxon>Xanthomonas</taxon>
    </lineage>
</organism>
<name>CHEB2_XANOM</name>
<feature type="chain" id="PRO_0000264334" description="Protein-glutamate methylesterase/protein-glutamine glutaminase 2">
    <location>
        <begin position="1"/>
        <end position="358"/>
    </location>
</feature>
<feature type="domain" description="Response regulatory" evidence="1">
    <location>
        <begin position="8"/>
        <end position="125"/>
    </location>
</feature>
<feature type="domain" description="CheB-type methylesterase" evidence="1">
    <location>
        <begin position="157"/>
        <end position="352"/>
    </location>
</feature>
<feature type="active site" evidence="1">
    <location>
        <position position="177"/>
    </location>
</feature>
<feature type="active site" evidence="1">
    <location>
        <position position="203"/>
    </location>
</feature>
<feature type="active site" evidence="1">
    <location>
        <position position="299"/>
    </location>
</feature>
<feature type="modified residue" description="4-aspartylphosphate" evidence="1">
    <location>
        <position position="59"/>
    </location>
</feature>